<protein>
    <recommendedName>
        <fullName evidence="11">Zinc finger protein 263</fullName>
    </recommendedName>
    <alternativeName>
        <fullName evidence="11">Zinc finger protein FPM315</fullName>
    </alternativeName>
    <alternativeName>
        <fullName evidence="11">Zinc finger protein with KRAB and SCAN domains 12</fullName>
    </alternativeName>
</protein>
<proteinExistence type="evidence at protein level"/>
<accession>O14978</accession>
<accession>B2R634</accession>
<accession>O43387</accession>
<accession>Q96H95</accession>
<evidence type="ECO:0000255" key="1">
    <source>
        <dbReference type="PROSITE-ProRule" id="PRU00042"/>
    </source>
</evidence>
<evidence type="ECO:0000255" key="2">
    <source>
        <dbReference type="PROSITE-ProRule" id="PRU00119"/>
    </source>
</evidence>
<evidence type="ECO:0000255" key="3">
    <source>
        <dbReference type="PROSITE-ProRule" id="PRU00187"/>
    </source>
</evidence>
<evidence type="ECO:0000256" key="4">
    <source>
        <dbReference type="SAM" id="MobiDB-lite"/>
    </source>
</evidence>
<evidence type="ECO:0000269" key="5">
    <source>
    </source>
</evidence>
<evidence type="ECO:0000269" key="6">
    <source>
    </source>
</evidence>
<evidence type="ECO:0000269" key="7">
    <source>
    </source>
</evidence>
<evidence type="ECO:0000269" key="8">
    <source>
    </source>
</evidence>
<evidence type="ECO:0000303" key="9">
    <source>
    </source>
</evidence>
<evidence type="ECO:0000305" key="10"/>
<evidence type="ECO:0000312" key="11">
    <source>
        <dbReference type="HGNC" id="HGNC:13056"/>
    </source>
</evidence>
<evidence type="ECO:0000312" key="12">
    <source>
        <dbReference type="Proteomes" id="UP000005640"/>
    </source>
</evidence>
<evidence type="ECO:0007744" key="13">
    <source>
    </source>
</evidence>
<evidence type="ECO:0007744" key="14">
    <source>
    </source>
</evidence>
<feature type="chain" id="PRO_0000047491" description="Zinc finger protein 263">
    <location>
        <begin position="1"/>
        <end position="683"/>
    </location>
</feature>
<feature type="domain" description="SCAN box" evidence="3">
    <location>
        <begin position="41"/>
        <end position="123"/>
    </location>
</feature>
<feature type="domain" description="KRAB" evidence="2">
    <location>
        <begin position="217"/>
        <end position="289"/>
    </location>
</feature>
<feature type="zinc finger region" description="C2H2-type 1" evidence="1">
    <location>
        <begin position="378"/>
        <end position="400"/>
    </location>
</feature>
<feature type="zinc finger region" description="C2H2-type 2" evidence="1">
    <location>
        <begin position="434"/>
        <end position="456"/>
    </location>
</feature>
<feature type="zinc finger region" description="C2H2-type 3" evidence="1">
    <location>
        <begin position="462"/>
        <end position="484"/>
    </location>
</feature>
<feature type="zinc finger region" description="C2H2-type 4" evidence="1">
    <location>
        <begin position="490"/>
        <end position="512"/>
    </location>
</feature>
<feature type="zinc finger region" description="C2H2-type 5" evidence="1">
    <location>
        <begin position="518"/>
        <end position="540"/>
    </location>
</feature>
<feature type="zinc finger region" description="C2H2-type 6" evidence="1">
    <location>
        <begin position="575"/>
        <end position="597"/>
    </location>
</feature>
<feature type="zinc finger region" description="C2H2-type 7" evidence="1">
    <location>
        <begin position="603"/>
        <end position="625"/>
    </location>
</feature>
<feature type="zinc finger region" description="C2H2-type 8" evidence="1">
    <location>
        <begin position="631"/>
        <end position="653"/>
    </location>
</feature>
<feature type="zinc finger region" description="C2H2-type 9" evidence="1">
    <location>
        <begin position="659"/>
        <end position="681"/>
    </location>
</feature>
<feature type="region of interest" description="Disordered" evidence="4">
    <location>
        <begin position="147"/>
        <end position="185"/>
    </location>
</feature>
<feature type="region of interest" description="Disordered" evidence="4">
    <location>
        <begin position="230"/>
        <end position="301"/>
    </location>
</feature>
<feature type="region of interest" description="Disordered" evidence="4">
    <location>
        <begin position="322"/>
        <end position="368"/>
    </location>
</feature>
<feature type="compositionally biased region" description="Basic and acidic residues" evidence="4">
    <location>
        <begin position="230"/>
        <end position="246"/>
    </location>
</feature>
<feature type="modified residue" description="Phosphoserine" evidence="13">
    <location>
        <position position="166"/>
    </location>
</feature>
<feature type="modified residue" description="Phosphoserine" evidence="13">
    <location>
        <position position="178"/>
    </location>
</feature>
<feature type="cross-link" description="Glycyl lysine isopeptide (Lys-Gly) (interchain with G-Cter in SUMO2)" evidence="14">
    <location>
        <position position="17"/>
    </location>
</feature>
<feature type="cross-link" description="Glycyl lysine isopeptide (Lys-Gly) (interchain with G-Cter in SUMO2)" evidence="14">
    <location>
        <position position="157"/>
    </location>
</feature>
<feature type="cross-link" description="Glycyl lysine isopeptide (Lys-Gly) (interchain with G-Cter in SUMO2)" evidence="14">
    <location>
        <position position="285"/>
    </location>
</feature>
<feature type="cross-link" description="Glycyl lysine isopeptide (Lys-Gly) (interchain with G-Cter in SUMO2)" evidence="14">
    <location>
        <position position="299"/>
    </location>
</feature>
<feature type="cross-link" description="Glycyl lysine isopeptide (Lys-Gly) (interchain with G-Cter in SUMO2)" evidence="14">
    <location>
        <position position="376"/>
    </location>
</feature>
<feature type="cross-link" description="Glycyl lysine isopeptide (Lys-Gly) (interchain with G-Cter in SUMO2)" evidence="14">
    <location>
        <position position="573"/>
    </location>
</feature>
<feature type="cross-link" description="Glycyl lysine isopeptide (Lys-Gly) (interchain with G-Cter in SUMO2)" evidence="14">
    <location>
        <position position="582"/>
    </location>
</feature>
<feature type="sequence variant" id="VAR_052801" description="In dbSNP:rs220379.">
    <original>C</original>
    <variation>S</variation>
    <location>
        <position position="310"/>
    </location>
</feature>
<feature type="sequence variant" id="VAR_052802" description="In dbSNP:rs34236132.">
    <original>V</original>
    <variation>I</variation>
    <location>
        <position position="534"/>
    </location>
</feature>
<feature type="sequence variant" id="VAR_061943" description="In dbSNP:rs57710602.">
    <original>R</original>
    <variation>Q</variation>
    <location>
        <position position="646"/>
    </location>
</feature>
<feature type="sequence variant" id="VAR_084704" description="Found in a patient with hypothalamic hamartoma; uncertain significance; dbSNP:rs747714553." evidence="5">
    <original>R</original>
    <variation>W</variation>
    <location>
        <position position="646"/>
    </location>
</feature>
<feature type="sequence conflict" description="In Ref. 1; BAA21853." evidence="10" ref="1">
    <original>D</original>
    <variation>G</variation>
    <location>
        <position position="118"/>
    </location>
</feature>
<gene>
    <name evidence="11" type="primary">ZNF263</name>
    <name evidence="9" type="synonym">FPM315</name>
    <name evidence="11" type="synonym">ZKSCAN12</name>
</gene>
<organism evidence="12">
    <name type="scientific">Homo sapiens</name>
    <name type="common">Human</name>
    <dbReference type="NCBI Taxonomy" id="9606"/>
    <lineage>
        <taxon>Eukaryota</taxon>
        <taxon>Metazoa</taxon>
        <taxon>Chordata</taxon>
        <taxon>Craniata</taxon>
        <taxon>Vertebrata</taxon>
        <taxon>Euteleostomi</taxon>
        <taxon>Mammalia</taxon>
        <taxon>Eutheria</taxon>
        <taxon>Euarchontoglires</taxon>
        <taxon>Primates</taxon>
        <taxon>Haplorrhini</taxon>
        <taxon>Catarrhini</taxon>
        <taxon>Hominidae</taxon>
        <taxon>Homo</taxon>
    </lineage>
</organism>
<sequence>MASGPGSQEREGLLIVKLEEDCAWSQELPPPDPGPSPEASHLRFRRFRFQEAAGPREALSRLQELCHGWLRPEMRTKEQILELLVLEQFLTILPQEIQSRVQELHPESGEEAVTLVEDMQRELGRLRQQVTNHGRGTEVLLEEPLPLETARESPSFKLEPMETERSPGPRLQELLGPSPQRDPQAVKERALSAPWLSLFPPEGNMEDKEMTGPQLPESLEDVAMYISQEEWGHQDPSKRALSRDTVQESYENVDSLESHIPSQEVPGTQVGQGGKLWDPSVQSCKEGLSPRGPAPGEEKFENLEGVPSVCSENIHPQVLLPDQARGEVPWSPELGRPHDRSQGDWAPPPEGGMEQALAGASSGRELGRPKELQPKKLHLCPLCGKNFSNNSNLIRHQRIHAAERLCMGVDCTEIFGGNPRFLSLHRAHLGEEAHKCLECGKCFSQNTHLTRHQRTHTGEKPYQCNICGKCFSCNSNLHRHQRTHTGEKPYKCPECGEIFAHSSNLLRHQRIHTGERPYKCPECGKSFSRSSHLVIHERTHERERLYPFSECGEAVSDSTPFLTNHGAHKAEKKLFECLTCGKSFRQGMHLTRHQRTHTGEKPYKCTLCGENFSHRSNLIRHQRIHTGEKPYTCHECGDSFSHSSNRIRHLRTHTGERPYKCSECGESFSRSSRLMSHQRTHTG</sequence>
<dbReference type="EMBL" id="D88827">
    <property type="protein sequence ID" value="BAA21853.1"/>
    <property type="molecule type" value="mRNA"/>
</dbReference>
<dbReference type="EMBL" id="AK312421">
    <property type="protein sequence ID" value="BAG35331.1"/>
    <property type="molecule type" value="mRNA"/>
</dbReference>
<dbReference type="EMBL" id="AC004232">
    <property type="protein sequence ID" value="AAC24490.1"/>
    <property type="molecule type" value="Genomic_DNA"/>
</dbReference>
<dbReference type="EMBL" id="CH471112">
    <property type="protein sequence ID" value="EAW85379.1"/>
    <property type="molecule type" value="Genomic_DNA"/>
</dbReference>
<dbReference type="EMBL" id="BC008805">
    <property type="protein sequence ID" value="AAH08805.1"/>
    <property type="molecule type" value="mRNA"/>
</dbReference>
<dbReference type="CCDS" id="CCDS10499.1"/>
<dbReference type="RefSeq" id="NP_005732.2">
    <property type="nucleotide sequence ID" value="NM_005741.4"/>
</dbReference>
<dbReference type="RefSeq" id="XP_054235334.1">
    <property type="nucleotide sequence ID" value="XM_054379359.1"/>
</dbReference>
<dbReference type="RefSeq" id="XP_054235335.1">
    <property type="nucleotide sequence ID" value="XM_054379360.1"/>
</dbReference>
<dbReference type="SMR" id="O14978"/>
<dbReference type="BioGRID" id="115431">
    <property type="interactions" value="149"/>
</dbReference>
<dbReference type="FunCoup" id="O14978">
    <property type="interactions" value="3042"/>
</dbReference>
<dbReference type="IntAct" id="O14978">
    <property type="interactions" value="80"/>
</dbReference>
<dbReference type="STRING" id="9606.ENSP00000219069"/>
<dbReference type="GlyGen" id="O14978">
    <property type="glycosylation" value="1 site, 1 O-linked glycan (1 site)"/>
</dbReference>
<dbReference type="iPTMnet" id="O14978"/>
<dbReference type="PhosphoSitePlus" id="O14978"/>
<dbReference type="BioMuta" id="ZNF263"/>
<dbReference type="jPOST" id="O14978"/>
<dbReference type="MassIVE" id="O14978"/>
<dbReference type="PaxDb" id="9606-ENSP00000219069"/>
<dbReference type="PeptideAtlas" id="O14978"/>
<dbReference type="ProteomicsDB" id="48352"/>
<dbReference type="Antibodypedia" id="24089">
    <property type="antibodies" value="244 antibodies from 24 providers"/>
</dbReference>
<dbReference type="DNASU" id="10127"/>
<dbReference type="Ensembl" id="ENST00000219069.6">
    <property type="protein sequence ID" value="ENSP00000219069.5"/>
    <property type="gene ID" value="ENSG00000006194.11"/>
</dbReference>
<dbReference type="GeneID" id="10127"/>
<dbReference type="KEGG" id="hsa:10127"/>
<dbReference type="MANE-Select" id="ENST00000219069.6">
    <property type="protein sequence ID" value="ENSP00000219069.5"/>
    <property type="RefSeq nucleotide sequence ID" value="NM_005741.5"/>
    <property type="RefSeq protein sequence ID" value="NP_005732.2"/>
</dbReference>
<dbReference type="UCSC" id="uc002cuq.4">
    <property type="organism name" value="human"/>
</dbReference>
<dbReference type="AGR" id="HGNC:13056"/>
<dbReference type="CTD" id="10127"/>
<dbReference type="DisGeNET" id="10127"/>
<dbReference type="GeneCards" id="ZNF263"/>
<dbReference type="HGNC" id="HGNC:13056">
    <property type="gene designation" value="ZNF263"/>
</dbReference>
<dbReference type="HPA" id="ENSG00000006194">
    <property type="expression patterns" value="Low tissue specificity"/>
</dbReference>
<dbReference type="MIM" id="604191">
    <property type="type" value="gene"/>
</dbReference>
<dbReference type="neXtProt" id="NX_O14978"/>
<dbReference type="OpenTargets" id="ENSG00000006194"/>
<dbReference type="PharmGKB" id="PA37634"/>
<dbReference type="VEuPathDB" id="HostDB:ENSG00000006194"/>
<dbReference type="eggNOG" id="KOG1721">
    <property type="taxonomic scope" value="Eukaryota"/>
</dbReference>
<dbReference type="GeneTree" id="ENSGT00940000159965"/>
<dbReference type="HOGENOM" id="CLU_002678_49_8_1"/>
<dbReference type="InParanoid" id="O14978"/>
<dbReference type="OMA" id="QQVTNQG"/>
<dbReference type="PAN-GO" id="O14978">
    <property type="GO annotations" value="3 GO annotations based on evolutionary models"/>
</dbReference>
<dbReference type="PhylomeDB" id="O14978"/>
<dbReference type="TreeFam" id="TF350829"/>
<dbReference type="PathwayCommons" id="O14978"/>
<dbReference type="Reactome" id="R-HSA-212436">
    <property type="pathway name" value="Generic Transcription Pathway"/>
</dbReference>
<dbReference type="SignaLink" id="O14978"/>
<dbReference type="BioGRID-ORCS" id="10127">
    <property type="hits" value="15 hits in 1187 CRISPR screens"/>
</dbReference>
<dbReference type="ChiTaRS" id="ZNF263">
    <property type="organism name" value="human"/>
</dbReference>
<dbReference type="GenomeRNAi" id="10127"/>
<dbReference type="Pharos" id="O14978">
    <property type="development level" value="Tbio"/>
</dbReference>
<dbReference type="PRO" id="PR:O14978"/>
<dbReference type="Proteomes" id="UP000005640">
    <property type="component" value="Chromosome 16"/>
</dbReference>
<dbReference type="RNAct" id="O14978">
    <property type="molecule type" value="protein"/>
</dbReference>
<dbReference type="Bgee" id="ENSG00000006194">
    <property type="expression patterns" value="Expressed in calcaneal tendon and 199 other cell types or tissues"/>
</dbReference>
<dbReference type="ExpressionAtlas" id="O14978">
    <property type="expression patterns" value="baseline and differential"/>
</dbReference>
<dbReference type="GO" id="GO:0005634">
    <property type="term" value="C:nucleus"/>
    <property type="evidence" value="ECO:0000314"/>
    <property type="project" value="UniProtKB"/>
</dbReference>
<dbReference type="GO" id="GO:0003700">
    <property type="term" value="F:DNA-binding transcription factor activity"/>
    <property type="evidence" value="ECO:0000304"/>
    <property type="project" value="ProtInc"/>
</dbReference>
<dbReference type="GO" id="GO:0000981">
    <property type="term" value="F:DNA-binding transcription factor activity, RNA polymerase II-specific"/>
    <property type="evidence" value="ECO:0000318"/>
    <property type="project" value="GO_Central"/>
</dbReference>
<dbReference type="GO" id="GO:0001227">
    <property type="term" value="F:DNA-binding transcription repressor activity, RNA polymerase II-specific"/>
    <property type="evidence" value="ECO:0000314"/>
    <property type="project" value="NTNU_SB"/>
</dbReference>
<dbReference type="GO" id="GO:0000978">
    <property type="term" value="F:RNA polymerase II cis-regulatory region sequence-specific DNA binding"/>
    <property type="evidence" value="ECO:0000318"/>
    <property type="project" value="GO_Central"/>
</dbReference>
<dbReference type="GO" id="GO:0043565">
    <property type="term" value="F:sequence-specific DNA binding"/>
    <property type="evidence" value="ECO:0000314"/>
    <property type="project" value="NTNU_SB"/>
</dbReference>
<dbReference type="GO" id="GO:1990837">
    <property type="term" value="F:sequence-specific double-stranded DNA binding"/>
    <property type="evidence" value="ECO:0000314"/>
    <property type="project" value="ARUK-UCL"/>
</dbReference>
<dbReference type="GO" id="GO:0000976">
    <property type="term" value="F:transcription cis-regulatory region binding"/>
    <property type="evidence" value="ECO:0000314"/>
    <property type="project" value="UniProtKB"/>
</dbReference>
<dbReference type="GO" id="GO:0008270">
    <property type="term" value="F:zinc ion binding"/>
    <property type="evidence" value="ECO:0007669"/>
    <property type="project" value="UniProtKB-KW"/>
</dbReference>
<dbReference type="GO" id="GO:0000122">
    <property type="term" value="P:negative regulation of transcription by RNA polymerase II"/>
    <property type="evidence" value="ECO:0000314"/>
    <property type="project" value="UniProtKB"/>
</dbReference>
<dbReference type="GO" id="GO:0045944">
    <property type="term" value="P:positive regulation of transcription by RNA polymerase II"/>
    <property type="evidence" value="ECO:0000314"/>
    <property type="project" value="UniProtKB"/>
</dbReference>
<dbReference type="GO" id="GO:0006355">
    <property type="term" value="P:regulation of DNA-templated transcription"/>
    <property type="evidence" value="ECO:0000304"/>
    <property type="project" value="ProtInc"/>
</dbReference>
<dbReference type="GO" id="GO:0006357">
    <property type="term" value="P:regulation of transcription by RNA polymerase II"/>
    <property type="evidence" value="ECO:0000318"/>
    <property type="project" value="GO_Central"/>
</dbReference>
<dbReference type="CDD" id="cd07765">
    <property type="entry name" value="KRAB_A-box"/>
    <property type="match status" value="1"/>
</dbReference>
<dbReference type="CDD" id="cd07936">
    <property type="entry name" value="SCAN"/>
    <property type="match status" value="1"/>
</dbReference>
<dbReference type="FunFam" id="3.30.160.60:FF:001772">
    <property type="entry name" value="Uncharacterized protein"/>
    <property type="match status" value="1"/>
</dbReference>
<dbReference type="FunFam" id="3.30.160.60:FF:001024">
    <property type="entry name" value="Zinc finger and SCAN domain-containing protein 20"/>
    <property type="match status" value="1"/>
</dbReference>
<dbReference type="FunFam" id="3.30.160.60:FF:000620">
    <property type="entry name" value="Zinc finger protein 263"/>
    <property type="match status" value="1"/>
</dbReference>
<dbReference type="FunFam" id="3.30.160.60:FF:001749">
    <property type="entry name" value="Zinc finger protein 263"/>
    <property type="match status" value="1"/>
</dbReference>
<dbReference type="FunFam" id="3.30.160.60:FF:003262">
    <property type="entry name" value="Zinc finger protein 263"/>
    <property type="match status" value="1"/>
</dbReference>
<dbReference type="FunFam" id="1.10.4020.10:FF:000001">
    <property type="entry name" value="zinc finger protein 263 isoform X1"/>
    <property type="match status" value="1"/>
</dbReference>
<dbReference type="FunFam" id="3.30.160.60:FF:000540">
    <property type="entry name" value="zinc finger protein 263 isoform X1"/>
    <property type="match status" value="1"/>
</dbReference>
<dbReference type="FunFam" id="3.30.160.60:FF:002887">
    <property type="entry name" value="Zinc finger protein 263 isoform X2"/>
    <property type="match status" value="1"/>
</dbReference>
<dbReference type="FunFam" id="3.30.160.60:FF:002343">
    <property type="entry name" value="Zinc finger protein 33A"/>
    <property type="match status" value="1"/>
</dbReference>
<dbReference type="FunFam" id="3.30.160.60:FF:000953">
    <property type="entry name" value="Zinc finger protein 691"/>
    <property type="match status" value="1"/>
</dbReference>
<dbReference type="Gene3D" id="6.10.140.140">
    <property type="match status" value="1"/>
</dbReference>
<dbReference type="Gene3D" id="3.30.160.60">
    <property type="entry name" value="Classic Zinc Finger"/>
    <property type="match status" value="9"/>
</dbReference>
<dbReference type="Gene3D" id="1.10.4020.10">
    <property type="entry name" value="DNA breaking-rejoining enzymes"/>
    <property type="match status" value="1"/>
</dbReference>
<dbReference type="InterPro" id="IPR001909">
    <property type="entry name" value="KRAB"/>
</dbReference>
<dbReference type="InterPro" id="IPR036051">
    <property type="entry name" value="KRAB_dom_sf"/>
</dbReference>
<dbReference type="InterPro" id="IPR003309">
    <property type="entry name" value="SCAN_dom"/>
</dbReference>
<dbReference type="InterPro" id="IPR038269">
    <property type="entry name" value="SCAN_sf"/>
</dbReference>
<dbReference type="InterPro" id="IPR036236">
    <property type="entry name" value="Znf_C2H2_sf"/>
</dbReference>
<dbReference type="InterPro" id="IPR013087">
    <property type="entry name" value="Znf_C2H2_type"/>
</dbReference>
<dbReference type="PANTHER" id="PTHR23235">
    <property type="entry name" value="KRUEPPEL-LIKE TRANSCRIPTION FACTOR"/>
    <property type="match status" value="1"/>
</dbReference>
<dbReference type="PANTHER" id="PTHR23235:SF120">
    <property type="entry name" value="KRUPPEL-LIKE FACTOR 15"/>
    <property type="match status" value="1"/>
</dbReference>
<dbReference type="Pfam" id="PF01352">
    <property type="entry name" value="KRAB"/>
    <property type="match status" value="1"/>
</dbReference>
<dbReference type="Pfam" id="PF02023">
    <property type="entry name" value="SCAN"/>
    <property type="match status" value="1"/>
</dbReference>
<dbReference type="Pfam" id="PF00096">
    <property type="entry name" value="zf-C2H2"/>
    <property type="match status" value="7"/>
</dbReference>
<dbReference type="Pfam" id="PF13465">
    <property type="entry name" value="zf-H2C2_2"/>
    <property type="match status" value="1"/>
</dbReference>
<dbReference type="SMART" id="SM00349">
    <property type="entry name" value="KRAB"/>
    <property type="match status" value="1"/>
</dbReference>
<dbReference type="SMART" id="SM00431">
    <property type="entry name" value="SCAN"/>
    <property type="match status" value="1"/>
</dbReference>
<dbReference type="SMART" id="SM00355">
    <property type="entry name" value="ZnF_C2H2"/>
    <property type="match status" value="9"/>
</dbReference>
<dbReference type="SUPFAM" id="SSF57667">
    <property type="entry name" value="beta-beta-alpha zinc fingers"/>
    <property type="match status" value="6"/>
</dbReference>
<dbReference type="SUPFAM" id="SSF109640">
    <property type="entry name" value="KRAB domain (Kruppel-associated box)"/>
    <property type="match status" value="1"/>
</dbReference>
<dbReference type="SUPFAM" id="SSF47353">
    <property type="entry name" value="Retrovirus capsid dimerization domain-like"/>
    <property type="match status" value="1"/>
</dbReference>
<dbReference type="PROSITE" id="PS50805">
    <property type="entry name" value="KRAB"/>
    <property type="match status" value="1"/>
</dbReference>
<dbReference type="PROSITE" id="PS50804">
    <property type="entry name" value="SCAN_BOX"/>
    <property type="match status" value="1"/>
</dbReference>
<dbReference type="PROSITE" id="PS00028">
    <property type="entry name" value="ZINC_FINGER_C2H2_1"/>
    <property type="match status" value="9"/>
</dbReference>
<dbReference type="PROSITE" id="PS50157">
    <property type="entry name" value="ZINC_FINGER_C2H2_2"/>
    <property type="match status" value="9"/>
</dbReference>
<reference key="1">
    <citation type="journal article" date="1997" name="Biochim. Biophys. Acta">
        <title>Isolation of a cDNA encoding a widely expressed novel zinc finger protein with the LeR and KRAB-A domains.</title>
        <authorList>
            <person name="Yokoyama M."/>
            <person name="Nakamura M."/>
            <person name="Okudo K."/>
            <person name="Matsubara K."/>
            <person name="Nishi Y."/>
            <person name="Matsumoto T."/>
            <person name="Fukushima A."/>
        </authorList>
    </citation>
    <scope>NUCLEOTIDE SEQUENCE [MRNA]</scope>
    <scope>TISSUE SPECIFICITY</scope>
</reference>
<reference key="2">
    <citation type="journal article" date="2004" name="Nat. Genet.">
        <title>Complete sequencing and characterization of 21,243 full-length human cDNAs.</title>
        <authorList>
            <person name="Ota T."/>
            <person name="Suzuki Y."/>
            <person name="Nishikawa T."/>
            <person name="Otsuki T."/>
            <person name="Sugiyama T."/>
            <person name="Irie R."/>
            <person name="Wakamatsu A."/>
            <person name="Hayashi K."/>
            <person name="Sato H."/>
            <person name="Nagai K."/>
            <person name="Kimura K."/>
            <person name="Makita H."/>
            <person name="Sekine M."/>
            <person name="Obayashi M."/>
            <person name="Nishi T."/>
            <person name="Shibahara T."/>
            <person name="Tanaka T."/>
            <person name="Ishii S."/>
            <person name="Yamamoto J."/>
            <person name="Saito K."/>
            <person name="Kawai Y."/>
            <person name="Isono Y."/>
            <person name="Nakamura Y."/>
            <person name="Nagahari K."/>
            <person name="Murakami K."/>
            <person name="Yasuda T."/>
            <person name="Iwayanagi T."/>
            <person name="Wagatsuma M."/>
            <person name="Shiratori A."/>
            <person name="Sudo H."/>
            <person name="Hosoiri T."/>
            <person name="Kaku Y."/>
            <person name="Kodaira H."/>
            <person name="Kondo H."/>
            <person name="Sugawara M."/>
            <person name="Takahashi M."/>
            <person name="Kanda K."/>
            <person name="Yokoi T."/>
            <person name="Furuya T."/>
            <person name="Kikkawa E."/>
            <person name="Omura Y."/>
            <person name="Abe K."/>
            <person name="Kamihara K."/>
            <person name="Katsuta N."/>
            <person name="Sato K."/>
            <person name="Tanikawa M."/>
            <person name="Yamazaki M."/>
            <person name="Ninomiya K."/>
            <person name="Ishibashi T."/>
            <person name="Yamashita H."/>
            <person name="Murakawa K."/>
            <person name="Fujimori K."/>
            <person name="Tanai H."/>
            <person name="Kimata M."/>
            <person name="Watanabe M."/>
            <person name="Hiraoka S."/>
            <person name="Chiba Y."/>
            <person name="Ishida S."/>
            <person name="Ono Y."/>
            <person name="Takiguchi S."/>
            <person name="Watanabe S."/>
            <person name="Yosida M."/>
            <person name="Hotuta T."/>
            <person name="Kusano J."/>
            <person name="Kanehori K."/>
            <person name="Takahashi-Fujii A."/>
            <person name="Hara H."/>
            <person name="Tanase T.-O."/>
            <person name="Nomura Y."/>
            <person name="Togiya S."/>
            <person name="Komai F."/>
            <person name="Hara R."/>
            <person name="Takeuchi K."/>
            <person name="Arita M."/>
            <person name="Imose N."/>
            <person name="Musashino K."/>
            <person name="Yuuki H."/>
            <person name="Oshima A."/>
            <person name="Sasaki N."/>
            <person name="Aotsuka S."/>
            <person name="Yoshikawa Y."/>
            <person name="Matsunawa H."/>
            <person name="Ichihara T."/>
            <person name="Shiohata N."/>
            <person name="Sano S."/>
            <person name="Moriya S."/>
            <person name="Momiyama H."/>
            <person name="Satoh N."/>
            <person name="Takami S."/>
            <person name="Terashima Y."/>
            <person name="Suzuki O."/>
            <person name="Nakagawa S."/>
            <person name="Senoh A."/>
            <person name="Mizoguchi H."/>
            <person name="Goto Y."/>
            <person name="Shimizu F."/>
            <person name="Wakebe H."/>
            <person name="Hishigaki H."/>
            <person name="Watanabe T."/>
            <person name="Sugiyama A."/>
            <person name="Takemoto M."/>
            <person name="Kawakami B."/>
            <person name="Yamazaki M."/>
            <person name="Watanabe K."/>
            <person name="Kumagai A."/>
            <person name="Itakura S."/>
            <person name="Fukuzumi Y."/>
            <person name="Fujimori Y."/>
            <person name="Komiyama M."/>
            <person name="Tashiro H."/>
            <person name="Tanigami A."/>
            <person name="Fujiwara T."/>
            <person name="Ono T."/>
            <person name="Yamada K."/>
            <person name="Fujii Y."/>
            <person name="Ozaki K."/>
            <person name="Hirao M."/>
            <person name="Ohmori Y."/>
            <person name="Kawabata A."/>
            <person name="Hikiji T."/>
            <person name="Kobatake N."/>
            <person name="Inagaki H."/>
            <person name="Ikema Y."/>
            <person name="Okamoto S."/>
            <person name="Okitani R."/>
            <person name="Kawakami T."/>
            <person name="Noguchi S."/>
            <person name="Itoh T."/>
            <person name="Shigeta K."/>
            <person name="Senba T."/>
            <person name="Matsumura K."/>
            <person name="Nakajima Y."/>
            <person name="Mizuno T."/>
            <person name="Morinaga M."/>
            <person name="Sasaki M."/>
            <person name="Togashi T."/>
            <person name="Oyama M."/>
            <person name="Hata H."/>
            <person name="Watanabe M."/>
            <person name="Komatsu T."/>
            <person name="Mizushima-Sugano J."/>
            <person name="Satoh T."/>
            <person name="Shirai Y."/>
            <person name="Takahashi Y."/>
            <person name="Nakagawa K."/>
            <person name="Okumura K."/>
            <person name="Nagase T."/>
            <person name="Nomura N."/>
            <person name="Kikuchi H."/>
            <person name="Masuho Y."/>
            <person name="Yamashita R."/>
            <person name="Nakai K."/>
            <person name="Yada T."/>
            <person name="Nakamura Y."/>
            <person name="Ohara O."/>
            <person name="Isogai T."/>
            <person name="Sugano S."/>
        </authorList>
    </citation>
    <scope>NUCLEOTIDE SEQUENCE [LARGE SCALE MRNA]</scope>
    <source>
        <tissue>Brain</tissue>
    </source>
</reference>
<reference key="3">
    <citation type="journal article" date="2004" name="Nature">
        <title>The sequence and analysis of duplication-rich human chromosome 16.</title>
        <authorList>
            <person name="Martin J."/>
            <person name="Han C."/>
            <person name="Gordon L.A."/>
            <person name="Terry A."/>
            <person name="Prabhakar S."/>
            <person name="She X."/>
            <person name="Xie G."/>
            <person name="Hellsten U."/>
            <person name="Chan Y.M."/>
            <person name="Altherr M."/>
            <person name="Couronne O."/>
            <person name="Aerts A."/>
            <person name="Bajorek E."/>
            <person name="Black S."/>
            <person name="Blumer H."/>
            <person name="Branscomb E."/>
            <person name="Brown N.C."/>
            <person name="Bruno W.J."/>
            <person name="Buckingham J.M."/>
            <person name="Callen D.F."/>
            <person name="Campbell C.S."/>
            <person name="Campbell M.L."/>
            <person name="Campbell E.W."/>
            <person name="Caoile C."/>
            <person name="Challacombe J.F."/>
            <person name="Chasteen L.A."/>
            <person name="Chertkov O."/>
            <person name="Chi H.C."/>
            <person name="Christensen M."/>
            <person name="Clark L.M."/>
            <person name="Cohn J.D."/>
            <person name="Denys M."/>
            <person name="Detter J.C."/>
            <person name="Dickson M."/>
            <person name="Dimitrijevic-Bussod M."/>
            <person name="Escobar J."/>
            <person name="Fawcett J.J."/>
            <person name="Flowers D."/>
            <person name="Fotopulos D."/>
            <person name="Glavina T."/>
            <person name="Gomez M."/>
            <person name="Gonzales E."/>
            <person name="Goodstein D."/>
            <person name="Goodwin L.A."/>
            <person name="Grady D.L."/>
            <person name="Grigoriev I."/>
            <person name="Groza M."/>
            <person name="Hammon N."/>
            <person name="Hawkins T."/>
            <person name="Haydu L."/>
            <person name="Hildebrand C.E."/>
            <person name="Huang W."/>
            <person name="Israni S."/>
            <person name="Jett J."/>
            <person name="Jewett P.B."/>
            <person name="Kadner K."/>
            <person name="Kimball H."/>
            <person name="Kobayashi A."/>
            <person name="Krawczyk M.-C."/>
            <person name="Leyba T."/>
            <person name="Longmire J.L."/>
            <person name="Lopez F."/>
            <person name="Lou Y."/>
            <person name="Lowry S."/>
            <person name="Ludeman T."/>
            <person name="Manohar C.F."/>
            <person name="Mark G.A."/>
            <person name="McMurray K.L."/>
            <person name="Meincke L.J."/>
            <person name="Morgan J."/>
            <person name="Moyzis R.K."/>
            <person name="Mundt M.O."/>
            <person name="Munk A.C."/>
            <person name="Nandkeshwar R.D."/>
            <person name="Pitluck S."/>
            <person name="Pollard M."/>
            <person name="Predki P."/>
            <person name="Parson-Quintana B."/>
            <person name="Ramirez L."/>
            <person name="Rash S."/>
            <person name="Retterer J."/>
            <person name="Ricke D.O."/>
            <person name="Robinson D.L."/>
            <person name="Rodriguez A."/>
            <person name="Salamov A."/>
            <person name="Saunders E.H."/>
            <person name="Scott D."/>
            <person name="Shough T."/>
            <person name="Stallings R.L."/>
            <person name="Stalvey M."/>
            <person name="Sutherland R.D."/>
            <person name="Tapia R."/>
            <person name="Tesmer J.G."/>
            <person name="Thayer N."/>
            <person name="Thompson L.S."/>
            <person name="Tice H."/>
            <person name="Torney D.C."/>
            <person name="Tran-Gyamfi M."/>
            <person name="Tsai M."/>
            <person name="Ulanovsky L.E."/>
            <person name="Ustaszewska A."/>
            <person name="Vo N."/>
            <person name="White P.S."/>
            <person name="Williams A.L."/>
            <person name="Wills P.L."/>
            <person name="Wu J.-R."/>
            <person name="Wu K."/>
            <person name="Yang J."/>
            <person name="DeJong P."/>
            <person name="Bruce D."/>
            <person name="Doggett N.A."/>
            <person name="Deaven L."/>
            <person name="Schmutz J."/>
            <person name="Grimwood J."/>
            <person name="Richardson P."/>
            <person name="Rokhsar D.S."/>
            <person name="Eichler E.E."/>
            <person name="Gilna P."/>
            <person name="Lucas S.M."/>
            <person name="Myers R.M."/>
            <person name="Rubin E.M."/>
            <person name="Pennacchio L.A."/>
        </authorList>
    </citation>
    <scope>NUCLEOTIDE SEQUENCE [LARGE SCALE GENOMIC DNA]</scope>
</reference>
<reference key="4">
    <citation type="submission" date="2005-09" db="EMBL/GenBank/DDBJ databases">
        <authorList>
            <person name="Mural R.J."/>
            <person name="Istrail S."/>
            <person name="Sutton G.G."/>
            <person name="Florea L."/>
            <person name="Halpern A.L."/>
            <person name="Mobarry C.M."/>
            <person name="Lippert R."/>
            <person name="Walenz B."/>
            <person name="Shatkay H."/>
            <person name="Dew I."/>
            <person name="Miller J.R."/>
            <person name="Flanigan M.J."/>
            <person name="Edwards N.J."/>
            <person name="Bolanos R."/>
            <person name="Fasulo D."/>
            <person name="Halldorsson B.V."/>
            <person name="Hannenhalli S."/>
            <person name="Turner R."/>
            <person name="Yooseph S."/>
            <person name="Lu F."/>
            <person name="Nusskern D.R."/>
            <person name="Shue B.C."/>
            <person name="Zheng X.H."/>
            <person name="Zhong F."/>
            <person name="Delcher A.L."/>
            <person name="Huson D.H."/>
            <person name="Kravitz S.A."/>
            <person name="Mouchard L."/>
            <person name="Reinert K."/>
            <person name="Remington K.A."/>
            <person name="Clark A.G."/>
            <person name="Waterman M.S."/>
            <person name="Eichler E.E."/>
            <person name="Adams M.D."/>
            <person name="Hunkapiller M.W."/>
            <person name="Myers E.W."/>
            <person name="Venter J.C."/>
        </authorList>
    </citation>
    <scope>NUCLEOTIDE SEQUENCE [LARGE SCALE GENOMIC DNA]</scope>
</reference>
<reference key="5">
    <citation type="journal article" date="2004" name="Genome Res.">
        <title>The status, quality, and expansion of the NIH full-length cDNA project: the Mammalian Gene Collection (MGC).</title>
        <authorList>
            <consortium name="The MGC Project Team"/>
        </authorList>
    </citation>
    <scope>NUCLEOTIDE SEQUENCE [LARGE SCALE MRNA]</scope>
    <source>
        <tissue>Lung</tissue>
    </source>
</reference>
<reference key="6">
    <citation type="journal article" date="2013" name="J. Proteome Res.">
        <title>Toward a comprehensive characterization of a human cancer cell phosphoproteome.</title>
        <authorList>
            <person name="Zhou H."/>
            <person name="Di Palma S."/>
            <person name="Preisinger C."/>
            <person name="Peng M."/>
            <person name="Polat A.N."/>
            <person name="Heck A.J."/>
            <person name="Mohammed S."/>
        </authorList>
    </citation>
    <scope>PHOSPHORYLATION [LARGE SCALE ANALYSIS] AT SER-166 AND SER-178</scope>
    <scope>IDENTIFICATION BY MASS SPECTROMETRY [LARGE SCALE ANALYSIS]</scope>
    <source>
        <tissue>Cervix carcinoma</tissue>
        <tissue>Erythroleukemia</tissue>
    </source>
</reference>
<reference key="7">
    <citation type="journal article" date="2017" name="Nat. Struct. Mol. Biol.">
        <title>Site-specific mapping of the human SUMO proteome reveals co-modification with phosphorylation.</title>
        <authorList>
            <person name="Hendriks I.A."/>
            <person name="Lyon D."/>
            <person name="Young C."/>
            <person name="Jensen L.J."/>
            <person name="Vertegaal A.C."/>
            <person name="Nielsen M.L."/>
        </authorList>
    </citation>
    <scope>SUMOYLATION [LARGE SCALE ANALYSIS] AT LYS-17; LYS-157; LYS-285; LYS-299; LYS-376; LYS-573 AND LYS-582</scope>
    <scope>IDENTIFICATION BY MASS SPECTROMETRY [LARGE SCALE ANALYSIS]</scope>
</reference>
<reference key="8">
    <citation type="journal article" date="2020" name="Oncogene">
        <title>The EGFR-ZNF263 signaling axis silences SIX3 in glioblastoma epigenetically.</title>
        <authorList>
            <person name="Yu Z."/>
            <person name="Feng J."/>
            <person name="Wang W."/>
            <person name="Deng Z."/>
            <person name="Zhang Y."/>
            <person name="Xiao L."/>
            <person name="Wang Z."/>
            <person name="Liu C."/>
            <person name="Liu Q."/>
            <person name="Chen S."/>
            <person name="Wu M."/>
        </authorList>
    </citation>
    <scope>FUNCTION</scope>
    <scope>INTERACTION WITH DNMT1; DNMT3A; PHF8; TRIM28; SETDB1; EZH2; UHRF1; CBX3; CBX5; ERK1; ERK2 AND HDAC2</scope>
    <scope>SUBCELLULAR LOCATION</scope>
    <scope>UBIQUITINATION</scope>
</reference>
<reference key="9">
    <citation type="journal article" date="2020" name="Proc. Natl. Acad. Sci. U.S.A.">
        <title>ZNF263 is a transcriptional regulator of heparin and heparan sulfate biosynthesis.</title>
        <authorList>
            <person name="Weiss R.J."/>
            <person name="Spahn P.N."/>
            <person name="Toledo A.G."/>
            <person name="Chiang A.W.T."/>
            <person name="Kellman B.P."/>
            <person name="Li J."/>
            <person name="Benner C."/>
            <person name="Glass C.K."/>
            <person name="Gordts P.L.S.M."/>
            <person name="Lewis N.E."/>
            <person name="Esko J.D."/>
        </authorList>
    </citation>
    <scope>FUNCTION</scope>
</reference>
<reference key="10">
    <citation type="journal article" date="2016" name="Ann. Clin. Transl. Neurol.">
        <title>Somatic mutations in GLI3 and OFD1 involved in sonic hedgehog signaling cause hypothalamic hamartoma.</title>
        <authorList>
            <person name="Saitsu H."/>
            <person name="Sonoda M."/>
            <person name="Higashijima T."/>
            <person name="Shirozu H."/>
            <person name="Masuda H."/>
            <person name="Tohyama J."/>
            <person name="Kato M."/>
            <person name="Nakashima M."/>
            <person name="Tsurusaki Y."/>
            <person name="Mizuguchi T."/>
            <person name="Miyatake S."/>
            <person name="Miyake N."/>
            <person name="Kameyama S."/>
            <person name="Matsumoto N."/>
        </authorList>
    </citation>
    <scope>VARIANT TRP-646</scope>
</reference>
<name>ZN263_HUMAN</name>
<comment type="function">
    <text evidence="6 7">Transcription factor that binds to the consensus sequence 5'-TCCTCCC-3' and acts as a transcriptional repressor (PubMed:32051553). Binds to the promoter region of SIX3 and recruits other proteins involved in chromatin modification and transcriptional corepression, resulting in methylation of the promoter and transcriptional repression (PubMed:32051553). Acts as a transcriptional repressor of HS3ST1 and HS3ST3A1 via binding to gene promoter regions (PubMed:32277030).</text>
</comment>
<comment type="subunit">
    <text evidence="6">Interacts with a number of proteins involved in chromatin modification and transcriptional corepression including DNMT1, DNMT3A, HDAC2, PHF8, TRIM28/KAP1, SETDB1, EZH2, UHRF1, CBX3/HP1-gamma, and CBX5/HP1-alpha; recruits these proteins to the SIX3 promoter region, leading to SIX3 transcriptional repression (PubMed:32051553). Interacts with MAPK3/ERK1 and MAPK1/ERK2 (PubMed:32051553).</text>
</comment>
<comment type="interaction">
    <interactant intactId="EBI-744493">
        <id>O14978</id>
    </interactant>
    <interactant intactId="EBI-750020">
        <id>P49760</id>
        <label>CLK2</label>
    </interactant>
    <organismsDiffer>false</organismsDiffer>
    <experiments>3</experiments>
</comment>
<comment type="interaction">
    <interactant intactId="EBI-744493">
        <id>O14978</id>
    </interactant>
    <interactant intactId="EBI-745579">
        <id>P49761</id>
        <label>CLK3</label>
    </interactant>
    <organismsDiffer>false</organismsDiffer>
    <experiments>3</experiments>
</comment>
<comment type="interaction">
    <interactant intactId="EBI-744493">
        <id>O14978</id>
    </interactant>
    <interactant intactId="EBI-5666657">
        <id>Q9NWQ4</id>
        <label>GPATCH2L</label>
    </interactant>
    <organismsDiffer>false</organismsDiffer>
    <experiments>3</experiments>
</comment>
<comment type="interaction">
    <interactant intactId="EBI-744493">
        <id>O14978</id>
    </interactant>
    <interactant intactId="EBI-11959863">
        <id>Q9NWQ4-1</id>
        <label>GPATCH2L</label>
    </interactant>
    <organismsDiffer>false</organismsDiffer>
    <experiments>3</experiments>
</comment>
<comment type="interaction">
    <interactant intactId="EBI-744493">
        <id>O14978</id>
    </interactant>
    <interactant intactId="EBI-752007">
        <id>Q96AA8</id>
        <label>JAKMIP2</label>
    </interactant>
    <organismsDiffer>false</organismsDiffer>
    <experiments>3</experiments>
</comment>
<comment type="interaction">
    <interactant intactId="EBI-744493">
        <id>O14978</id>
    </interactant>
    <interactant intactId="EBI-739832">
        <id>Q8TBB1</id>
        <label>LNX1</label>
    </interactant>
    <organismsDiffer>false</organismsDiffer>
    <experiments>3</experiments>
</comment>
<comment type="interaction">
    <interactant intactId="EBI-744493">
        <id>O14978</id>
    </interactant>
    <interactant intactId="EBI-368321">
        <id>O60437</id>
        <label>PPL</label>
    </interactant>
    <organismsDiffer>false</organismsDiffer>
    <experiments>3</experiments>
</comment>
<comment type="interaction">
    <interactant intactId="EBI-744493">
        <id>O14978</id>
    </interactant>
    <interactant intactId="EBI-745846">
        <id>P57086</id>
        <label>SCAND1</label>
    </interactant>
    <organismsDiffer>false</organismsDiffer>
    <experiments>7</experiments>
</comment>
<comment type="interaction">
    <interactant intactId="EBI-744493">
        <id>O14978</id>
    </interactant>
    <interactant intactId="EBI-750484">
        <id>Q9Y4C2</id>
        <label>TCAF1</label>
    </interactant>
    <organismsDiffer>false</organismsDiffer>
    <experiments>3</experiments>
</comment>
<comment type="interaction">
    <interactant intactId="EBI-744493">
        <id>O14978</id>
    </interactant>
    <interactant intactId="EBI-725997">
        <id>Q8WV44</id>
        <label>TRIM41</label>
    </interactant>
    <organismsDiffer>false</organismsDiffer>
    <experiments>7</experiments>
</comment>
<comment type="interaction">
    <interactant intactId="EBI-744493">
        <id>O14978</id>
    </interactant>
    <interactant intactId="EBI-741694">
        <id>P49910</id>
        <label>ZNF165</label>
    </interactant>
    <organismsDiffer>false</organismsDiffer>
    <experiments>3</experiments>
</comment>
<comment type="interaction">
    <interactant intactId="EBI-744493">
        <id>O14978</id>
    </interactant>
    <interactant intactId="EBI-10178224">
        <id>P10073</id>
        <label>ZSCAN22</label>
    </interactant>
    <organismsDiffer>false</organismsDiffer>
    <experiments>3</experiments>
</comment>
<comment type="subcellular location">
    <subcellularLocation>
        <location evidence="6">Nucleus</location>
    </subcellularLocation>
</comment>
<comment type="tissue specificity">
    <text evidence="8">Expressed in heart, brain, placenta, lung, liver, skeletal muscle, kidney, pancreas, spleen, thymus, prostate, testis, ovary, small intestine, colon and leukocyte.</text>
</comment>
<comment type="PTM">
    <text evidence="6">Ubiquitinated, leading to proteasomal degradation.</text>
</comment>
<comment type="miscellaneous">
    <text evidence="6">May be involved in the EGFR-mediated promotion of invasion and anchorage-independent growth in glioblastomas via silencing of SIX3 (PubMed:32051553). May act as a prognostic indicator in glioblastoma patients, with increased expression correlating with poor prognosis (PubMed:32051553).</text>
</comment>
<comment type="similarity">
    <text evidence="10">Belongs to the krueppel C2H2-type zinc-finger protein family.</text>
</comment>
<keyword id="KW-0238">DNA-binding</keyword>
<keyword id="KW-1017">Isopeptide bond</keyword>
<keyword id="KW-0479">Metal-binding</keyword>
<keyword id="KW-0539">Nucleus</keyword>
<keyword id="KW-0597">Phosphoprotein</keyword>
<keyword id="KW-1267">Proteomics identification</keyword>
<keyword id="KW-1185">Reference proteome</keyword>
<keyword id="KW-0677">Repeat</keyword>
<keyword id="KW-0678">Repressor</keyword>
<keyword id="KW-0804">Transcription</keyword>
<keyword id="KW-0805">Transcription regulation</keyword>
<keyword id="KW-0832">Ubl conjugation</keyword>
<keyword id="KW-0862">Zinc</keyword>
<keyword id="KW-0863">Zinc-finger</keyword>